<proteinExistence type="evidence at protein level"/>
<feature type="chain" id="PRO_0000324488" description="Protein FAM83H">
    <location>
        <begin position="1"/>
        <end position="1179"/>
    </location>
</feature>
<feature type="region of interest" description="DUF1669" evidence="8">
    <location>
        <begin position="1"/>
        <end position="286"/>
    </location>
</feature>
<feature type="region of interest" description="Mediates interaction with CSNK1A1 and is required for FAM83H activity in keratin cytoskeleton organization" evidence="4">
    <location>
        <begin position="1"/>
        <end position="286"/>
    </location>
</feature>
<feature type="region of interest" description="Disordered" evidence="2">
    <location>
        <begin position="484"/>
        <end position="577"/>
    </location>
</feature>
<feature type="region of interest" description="Disordered" evidence="2">
    <location>
        <begin position="636"/>
        <end position="669"/>
    </location>
</feature>
<feature type="region of interest" description="Disordered" evidence="2">
    <location>
        <begin position="830"/>
        <end position="1026"/>
    </location>
</feature>
<feature type="region of interest" description="Disordered" evidence="2">
    <location>
        <begin position="1047"/>
        <end position="1084"/>
    </location>
</feature>
<feature type="region of interest" description="Disordered" evidence="2">
    <location>
        <begin position="1143"/>
        <end position="1165"/>
    </location>
</feature>
<feature type="compositionally biased region" description="Polar residues" evidence="2">
    <location>
        <begin position="836"/>
        <end position="847"/>
    </location>
</feature>
<feature type="compositionally biased region" description="Polar residues" evidence="2">
    <location>
        <begin position="884"/>
        <end position="906"/>
    </location>
</feature>
<feature type="modified residue" description="Phosphothreonine" evidence="14">
    <location>
        <position position="465"/>
    </location>
</feature>
<feature type="modified residue" description="Phosphoserine" evidence="15">
    <location>
        <position position="513"/>
    </location>
</feature>
<feature type="modified residue" description="Phosphoserine" evidence="15">
    <location>
        <position position="514"/>
    </location>
</feature>
<feature type="modified residue" description="Phosphoserine" evidence="15">
    <location>
        <position position="516"/>
    </location>
</feature>
<feature type="modified residue" description="Phosphoserine" evidence="12 13 14 15 16">
    <location>
        <position position="523"/>
    </location>
</feature>
<feature type="modified residue" description="Phosphoserine" evidence="11 12 14 15">
    <location>
        <position position="647"/>
    </location>
</feature>
<feature type="modified residue" description="Phosphoserine" evidence="15">
    <location>
        <position position="667"/>
    </location>
</feature>
<feature type="modified residue" description="Phosphothreonine" evidence="16">
    <location>
        <position position="756"/>
    </location>
</feature>
<feature type="modified residue" description="Phosphoserine" evidence="14">
    <location>
        <position position="759"/>
    </location>
</feature>
<feature type="modified residue" description="Phosphoserine" evidence="12 14 15">
    <location>
        <position position="785"/>
    </location>
</feature>
<feature type="modified residue" description="Phosphoserine" evidence="16">
    <location>
        <position position="813"/>
    </location>
</feature>
<feature type="modified residue" description="Phosphoserine" evidence="14 15">
    <location>
        <position position="870"/>
    </location>
</feature>
<feature type="modified residue" description="Phosphoserine" evidence="11 14 15">
    <location>
        <position position="881"/>
    </location>
</feature>
<feature type="modified residue" description="Phosphothreonine" evidence="11">
    <location>
        <position position="883"/>
    </location>
</feature>
<feature type="modified residue" description="Phosphoserine" evidence="11 14 15">
    <location>
        <position position="892"/>
    </location>
</feature>
<feature type="modified residue" description="Phosphothreonine" evidence="1">
    <location>
        <position position="894"/>
    </location>
</feature>
<feature type="modified residue" description="Phosphoserine" evidence="11 14 15">
    <location>
        <position position="903"/>
    </location>
</feature>
<feature type="modified residue" description="Phosphoserine" evidence="13 14 15 16">
    <location>
        <position position="914"/>
    </location>
</feature>
<feature type="modified residue" description="Phosphoserine" evidence="15">
    <location>
        <position position="925"/>
    </location>
</feature>
<feature type="modified residue" description="Phosphoserine" evidence="11 14 15">
    <location>
        <position position="936"/>
    </location>
</feature>
<feature type="modified residue" description="Phosphoserine" evidence="11 14">
    <location>
        <position position="945"/>
    </location>
</feature>
<feature type="modified residue" description="Phosphoserine" evidence="10 11 12 13 14 15 16">
    <location>
        <position position="1003"/>
    </location>
</feature>
<feature type="modified residue" description="Phosphoserine" evidence="1">
    <location>
        <position position="1009"/>
    </location>
</feature>
<feature type="modified residue" description="Phosphoserine" evidence="11">
    <location>
        <position position="1024"/>
    </location>
</feature>
<feature type="modified residue" description="Phosphoserine" evidence="11 15">
    <location>
        <position position="1025"/>
    </location>
</feature>
<feature type="modified residue" description="Phosphothreonine" evidence="14">
    <location>
        <position position="1040"/>
    </location>
</feature>
<feature type="modified residue" description="Phosphoserine" evidence="14">
    <location>
        <position position="1048"/>
    </location>
</feature>
<feature type="modified residue" description="Phosphoserine" evidence="16">
    <location>
        <position position="1068"/>
    </location>
</feature>
<feature type="modified residue" description="Phosphoserine" evidence="15">
    <location>
        <position position="1147"/>
    </location>
</feature>
<feature type="sequence variant" id="VAR_062189" description="In dbSNP:rs9969600.">
    <original>Q</original>
    <variation>H</variation>
    <location>
        <position position="201"/>
    </location>
</feature>
<feature type="sequence variant" id="VAR_073954" description="In AI3A; mild form; dbSNP:rs312262803." evidence="5">
    <original>G</original>
    <variation>C</variation>
    <location>
        <position position="557"/>
    </location>
</feature>
<feature type="mutagenesis site" description="Decreased interaction with CSNK1A1 and CSNK1E." evidence="6">
    <original>D</original>
    <variation>A</variation>
    <location>
        <position position="236"/>
    </location>
</feature>
<feature type="mutagenesis site" description="No effect on interaction with CSNK1A1 and function in keratin cytoskeleton organization." evidence="4">
    <original>F</original>
    <variation>A</variation>
    <location>
        <position position="251"/>
    </location>
</feature>
<feature type="mutagenesis site" description="Decreased interaction with CSNK1A1 and CSNK1E." evidence="6">
    <original>F</original>
    <variation>A</variation>
    <location>
        <position position="270"/>
    </location>
</feature>
<feature type="mutagenesis site" description="Decreased interaction with CSNK1A1 and loss of function in keratin cytoskeleton organization." evidence="4">
    <original>F</original>
    <variation>A</variation>
    <location>
        <position position="274"/>
    </location>
</feature>
<feature type="sequence conflict" description="In Ref. 2; BAC87207." evidence="7" ref="2">
    <original>E</original>
    <variation>V</variation>
    <location>
        <position position="605"/>
    </location>
</feature>
<comment type="function">
    <text evidence="3 4">May play a major role in the structural organization and calcification of developing enamel (PubMed:18252228). May play a role in keratin cytoskeleton disassembly by recruiting CSNK1A1 to keratin filaments. Thereby, it may regulate epithelial cell migration (PubMed:23902688).</text>
</comment>
<comment type="subunit">
    <text evidence="4 6">Directly interacts (via DUF1669) with casein kinase isoforms CSNK1A1, CSNK1A1L, CSNK1D and CSNK1E (PubMed:23902688, PubMed:29789297). Interaction with CSNK1A1 recruits CSNK1A1 to keratin filaments (PubMed:23902688). Interacts with KRT18 and probably other keratins (PubMed:23902688).</text>
</comment>
<comment type="interaction">
    <interactant intactId="EBI-2556538">
        <id>Q6ZRV2</id>
    </interactant>
    <interactant intactId="EBI-1383726">
        <id>P48729</id>
        <label>CSNK1A1</label>
    </interactant>
    <organismsDiffer>false</organismsDiffer>
    <experiments>13</experiments>
</comment>
<comment type="interaction">
    <interactant intactId="EBI-2556538">
        <id>Q6ZRV2</id>
    </interactant>
    <interactant intactId="EBI-1048763">
        <id>Q9H3U1</id>
        <label>UNC45A</label>
    </interactant>
    <organismsDiffer>false</organismsDiffer>
    <experiments>3</experiments>
</comment>
<comment type="subcellular location">
    <subcellularLocation>
        <location evidence="4">Cytoplasm</location>
        <location evidence="4">Cytoskeleton</location>
    </subcellularLocation>
    <subcellularLocation>
        <location evidence="6">Cytoplasm</location>
    </subcellularLocation>
    <text evidence="4">Colocalizes with keratin filaments.</text>
</comment>
<comment type="tissue specificity">
    <text evidence="3">Expressed in the tooth follicle.</text>
</comment>
<comment type="domain">
    <text evidence="8">All members of the FAM83 family of proteins share a conserved N-terminal DUF1669 (domain of unknown function 1669) domain of about 300 amino acids. This domain mediates the interaction with casein kinase 1 (CK1) isoforms. Therefore, it has been proposed to rename DUF1669 the polypeptide anchor of CK1 domain.</text>
</comment>
<comment type="disease" evidence="3 5">
    <disease id="DI-00093">
        <name>Amelogenesis imperfecta 3A</name>
        <acronym>AI3A</acronym>
        <description>An autosomal dominant hypomineralized form of amelogenesis imperfecta, a defect of enamel formation. AI3A is characterized by enamel of normal thickness but soft and with cheesy consistency. Enamel is lost from tooth soon after eruption.</description>
        <dbReference type="MIM" id="130900"/>
    </disease>
    <text>The disease is caused by variants affecting the gene represented in this entry.</text>
</comment>
<comment type="similarity">
    <text evidence="7">Belongs to the FAM83 family.</text>
</comment>
<comment type="sequence caution" evidence="7">
    <conflict type="erroneous initiation">
        <sequence resource="EMBL-CDS" id="BAC87207"/>
    </conflict>
    <text>Truncated N-terminus.</text>
</comment>
<sequence length="1179" mass="127122">MARRSQSSSQGDNPLAPGYLPPHYKEYYRLAVDALAEGGSEAYSRFLATEGAPDFLCPEELEHVSRHLRPPQYVTREPPEGSLLDVDMDGSSGTYWPVNSDQAVPELDLGWPLTFGFQGTEVTTLVQPPPPDSPSIKDEARRMIRSAQQVVAVVMDMFTDVDLLSEVLEAAARRVPVYILLDEMNAQHFLDMADKCRVNLQHVDFLRVRTVAGPTYYCRTGKSFKGHVKEKFLLVDCAVVMSGSYSFMWSFEKIHRSLAHVFQGELVSSFDEEFRILFAQSEPLVPSAAALARMDAYALAPYAGAGPLVGVPGVGAPTPFSFPKRAHLLFPPPREEGLGFPSFLDPDRHFLSAFRREEPPRMPGGALEPHAGLRPLSRRLEAEAGPAGELAGARGFFQARHLEMDAFKRHSFATEGAGAVENFAAARQVSRQTFLSHGDDFRFQTSHFHRDQLYQQQYQWDPQLTPARPQGLFEKLRGGRAGFADPDDFTLGAGPRFPELGPDGHQRLDYVPSSASREVRHGSDPAFAPGPRGLEPSGAPRPNLTQRFPCQAAARPGPDPAPEAEPERRGGPEGRAGLRRWRLASYLSGCHGEDGGDDGLPAPMEAEAYEDDVLAPGGRAPAGDLLPSAFRVPAAFPTKVPVPGPGSGGNGPEREGPEEPGLAKQDSFRSRLNPLVQRSSRLRSSLIFSTSQAEGAAGAAAATEKVQLLHKEQTVSETLGPGGEAVRSAASTKVAELLEKYKGPARDPGGGAGAITVASHSKAVVSQAWREEVAAPGAVGGERRSLESCLLDLRDSFAQQLHQEAERQPGAASLTAAQLLDTLGRSGSDRLPSRFLSAQSHSTSPQGLDSPLPLEGSGAHQVLHNESKGSPTSAYPERKGSPTPGFSTRRGSPTTGFIEQKGSPTSAYPERRGSPVPPVPERRSSPVPPVPERRGSLTLTISGESPKAGPAEEGPSGPMEVLRKGSLRLRQLLSPKGERRMEDEGGFPVPQENGQPESPRRLSLGQGDSTEAATEERGPRARLSSATANALYSSNLRDDTKAILEQISAHGQKHRAVPAPSPGPTHNSPELGRPPAAGVLAPDMSDKDKCSAIFRSDSLGTQGRLSRTLPASAEERDRLLRRMESMRKEKRVYSRFEVFCKKEEASSPGAGEGPAEEGTRDSKVGKFVPKILGTFKSKK</sequence>
<keyword id="KW-0986">Amelogenesis imperfecta</keyword>
<keyword id="KW-0091">Biomineralization</keyword>
<keyword id="KW-0963">Cytoplasm</keyword>
<keyword id="KW-0206">Cytoskeleton</keyword>
<keyword id="KW-0225">Disease variant</keyword>
<keyword id="KW-0597">Phosphoprotein</keyword>
<keyword id="KW-1267">Proteomics identification</keyword>
<keyword id="KW-1185">Reference proteome</keyword>
<organism>
    <name type="scientific">Homo sapiens</name>
    <name type="common">Human</name>
    <dbReference type="NCBI Taxonomy" id="9606"/>
    <lineage>
        <taxon>Eukaryota</taxon>
        <taxon>Metazoa</taxon>
        <taxon>Chordata</taxon>
        <taxon>Craniata</taxon>
        <taxon>Vertebrata</taxon>
        <taxon>Euteleostomi</taxon>
        <taxon>Mammalia</taxon>
        <taxon>Eutheria</taxon>
        <taxon>Euarchontoglires</taxon>
        <taxon>Primates</taxon>
        <taxon>Haplorrhini</taxon>
        <taxon>Catarrhini</taxon>
        <taxon>Hominidae</taxon>
        <taxon>Homo</taxon>
    </lineage>
</organism>
<reference key="1">
    <citation type="journal article" date="2006" name="Nature">
        <title>DNA sequence and analysis of human chromosome 8.</title>
        <authorList>
            <person name="Nusbaum C."/>
            <person name="Mikkelsen T.S."/>
            <person name="Zody M.C."/>
            <person name="Asakawa S."/>
            <person name="Taudien S."/>
            <person name="Garber M."/>
            <person name="Kodira C.D."/>
            <person name="Schueler M.G."/>
            <person name="Shimizu A."/>
            <person name="Whittaker C.A."/>
            <person name="Chang J.L."/>
            <person name="Cuomo C.A."/>
            <person name="Dewar K."/>
            <person name="FitzGerald M.G."/>
            <person name="Yang X."/>
            <person name="Allen N.R."/>
            <person name="Anderson S."/>
            <person name="Asakawa T."/>
            <person name="Blechschmidt K."/>
            <person name="Bloom T."/>
            <person name="Borowsky M.L."/>
            <person name="Butler J."/>
            <person name="Cook A."/>
            <person name="Corum B."/>
            <person name="DeArellano K."/>
            <person name="DeCaprio D."/>
            <person name="Dooley K.T."/>
            <person name="Dorris L. III"/>
            <person name="Engels R."/>
            <person name="Gloeckner G."/>
            <person name="Hafez N."/>
            <person name="Hagopian D.S."/>
            <person name="Hall J.L."/>
            <person name="Ishikawa S.K."/>
            <person name="Jaffe D.B."/>
            <person name="Kamat A."/>
            <person name="Kudoh J."/>
            <person name="Lehmann R."/>
            <person name="Lokitsang T."/>
            <person name="Macdonald P."/>
            <person name="Major J.E."/>
            <person name="Matthews C.D."/>
            <person name="Mauceli E."/>
            <person name="Menzel U."/>
            <person name="Mihalev A.H."/>
            <person name="Minoshima S."/>
            <person name="Murayama Y."/>
            <person name="Naylor J.W."/>
            <person name="Nicol R."/>
            <person name="Nguyen C."/>
            <person name="O'Leary S.B."/>
            <person name="O'Neill K."/>
            <person name="Parker S.C.J."/>
            <person name="Polley A."/>
            <person name="Raymond C.K."/>
            <person name="Reichwald K."/>
            <person name="Rodriguez J."/>
            <person name="Sasaki T."/>
            <person name="Schilhabel M."/>
            <person name="Siddiqui R."/>
            <person name="Smith C.L."/>
            <person name="Sneddon T.P."/>
            <person name="Talamas J.A."/>
            <person name="Tenzin P."/>
            <person name="Topham K."/>
            <person name="Venkataraman V."/>
            <person name="Wen G."/>
            <person name="Yamazaki S."/>
            <person name="Young S.K."/>
            <person name="Zeng Q."/>
            <person name="Zimmer A.R."/>
            <person name="Rosenthal A."/>
            <person name="Birren B.W."/>
            <person name="Platzer M."/>
            <person name="Shimizu N."/>
            <person name="Lander E.S."/>
        </authorList>
    </citation>
    <scope>NUCLEOTIDE SEQUENCE [LARGE SCALE GENOMIC DNA]</scope>
</reference>
<reference key="2">
    <citation type="journal article" date="2004" name="Nat. Genet.">
        <title>Complete sequencing and characterization of 21,243 full-length human cDNAs.</title>
        <authorList>
            <person name="Ota T."/>
            <person name="Suzuki Y."/>
            <person name="Nishikawa T."/>
            <person name="Otsuki T."/>
            <person name="Sugiyama T."/>
            <person name="Irie R."/>
            <person name="Wakamatsu A."/>
            <person name="Hayashi K."/>
            <person name="Sato H."/>
            <person name="Nagai K."/>
            <person name="Kimura K."/>
            <person name="Makita H."/>
            <person name="Sekine M."/>
            <person name="Obayashi M."/>
            <person name="Nishi T."/>
            <person name="Shibahara T."/>
            <person name="Tanaka T."/>
            <person name="Ishii S."/>
            <person name="Yamamoto J."/>
            <person name="Saito K."/>
            <person name="Kawai Y."/>
            <person name="Isono Y."/>
            <person name="Nakamura Y."/>
            <person name="Nagahari K."/>
            <person name="Murakami K."/>
            <person name="Yasuda T."/>
            <person name="Iwayanagi T."/>
            <person name="Wagatsuma M."/>
            <person name="Shiratori A."/>
            <person name="Sudo H."/>
            <person name="Hosoiri T."/>
            <person name="Kaku Y."/>
            <person name="Kodaira H."/>
            <person name="Kondo H."/>
            <person name="Sugawara M."/>
            <person name="Takahashi M."/>
            <person name="Kanda K."/>
            <person name="Yokoi T."/>
            <person name="Furuya T."/>
            <person name="Kikkawa E."/>
            <person name="Omura Y."/>
            <person name="Abe K."/>
            <person name="Kamihara K."/>
            <person name="Katsuta N."/>
            <person name="Sato K."/>
            <person name="Tanikawa M."/>
            <person name="Yamazaki M."/>
            <person name="Ninomiya K."/>
            <person name="Ishibashi T."/>
            <person name="Yamashita H."/>
            <person name="Murakawa K."/>
            <person name="Fujimori K."/>
            <person name="Tanai H."/>
            <person name="Kimata M."/>
            <person name="Watanabe M."/>
            <person name="Hiraoka S."/>
            <person name="Chiba Y."/>
            <person name="Ishida S."/>
            <person name="Ono Y."/>
            <person name="Takiguchi S."/>
            <person name="Watanabe S."/>
            <person name="Yosida M."/>
            <person name="Hotuta T."/>
            <person name="Kusano J."/>
            <person name="Kanehori K."/>
            <person name="Takahashi-Fujii A."/>
            <person name="Hara H."/>
            <person name="Tanase T.-O."/>
            <person name="Nomura Y."/>
            <person name="Togiya S."/>
            <person name="Komai F."/>
            <person name="Hara R."/>
            <person name="Takeuchi K."/>
            <person name="Arita M."/>
            <person name="Imose N."/>
            <person name="Musashino K."/>
            <person name="Yuuki H."/>
            <person name="Oshima A."/>
            <person name="Sasaki N."/>
            <person name="Aotsuka S."/>
            <person name="Yoshikawa Y."/>
            <person name="Matsunawa H."/>
            <person name="Ichihara T."/>
            <person name="Shiohata N."/>
            <person name="Sano S."/>
            <person name="Moriya S."/>
            <person name="Momiyama H."/>
            <person name="Satoh N."/>
            <person name="Takami S."/>
            <person name="Terashima Y."/>
            <person name="Suzuki O."/>
            <person name="Nakagawa S."/>
            <person name="Senoh A."/>
            <person name="Mizoguchi H."/>
            <person name="Goto Y."/>
            <person name="Shimizu F."/>
            <person name="Wakebe H."/>
            <person name="Hishigaki H."/>
            <person name="Watanabe T."/>
            <person name="Sugiyama A."/>
            <person name="Takemoto M."/>
            <person name="Kawakami B."/>
            <person name="Yamazaki M."/>
            <person name="Watanabe K."/>
            <person name="Kumagai A."/>
            <person name="Itakura S."/>
            <person name="Fukuzumi Y."/>
            <person name="Fujimori Y."/>
            <person name="Komiyama M."/>
            <person name="Tashiro H."/>
            <person name="Tanigami A."/>
            <person name="Fujiwara T."/>
            <person name="Ono T."/>
            <person name="Yamada K."/>
            <person name="Fujii Y."/>
            <person name="Ozaki K."/>
            <person name="Hirao M."/>
            <person name="Ohmori Y."/>
            <person name="Kawabata A."/>
            <person name="Hikiji T."/>
            <person name="Kobatake N."/>
            <person name="Inagaki H."/>
            <person name="Ikema Y."/>
            <person name="Okamoto S."/>
            <person name="Okitani R."/>
            <person name="Kawakami T."/>
            <person name="Noguchi S."/>
            <person name="Itoh T."/>
            <person name="Shigeta K."/>
            <person name="Senba T."/>
            <person name="Matsumura K."/>
            <person name="Nakajima Y."/>
            <person name="Mizuno T."/>
            <person name="Morinaga M."/>
            <person name="Sasaki M."/>
            <person name="Togashi T."/>
            <person name="Oyama M."/>
            <person name="Hata H."/>
            <person name="Watanabe M."/>
            <person name="Komatsu T."/>
            <person name="Mizushima-Sugano J."/>
            <person name="Satoh T."/>
            <person name="Shirai Y."/>
            <person name="Takahashi Y."/>
            <person name="Nakagawa K."/>
            <person name="Okumura K."/>
            <person name="Nagase T."/>
            <person name="Nomura N."/>
            <person name="Kikuchi H."/>
            <person name="Masuho Y."/>
            <person name="Yamashita R."/>
            <person name="Nakai K."/>
            <person name="Yada T."/>
            <person name="Nakamura Y."/>
            <person name="Ohara O."/>
            <person name="Isogai T."/>
            <person name="Sugano S."/>
        </authorList>
    </citation>
    <scope>NUCLEOTIDE SEQUENCE [LARGE SCALE MRNA] OF 275-1179</scope>
    <source>
        <tissue>Testis</tissue>
    </source>
</reference>
<reference key="3">
    <citation type="journal article" date="2004" name="Genome Res.">
        <title>The status, quality, and expansion of the NIH full-length cDNA project: the Mammalian Gene Collection (MGC).</title>
        <authorList>
            <consortium name="The MGC Project Team"/>
        </authorList>
    </citation>
    <scope>NUCLEOTIDE SEQUENCE [LARGE SCALE MRNA] OF 861-1179</scope>
    <source>
        <tissue>Placenta</tissue>
        <tissue>Prostate</tissue>
    </source>
</reference>
<reference key="4">
    <citation type="journal article" date="2006" name="Cell">
        <title>Global, in vivo, and site-specific phosphorylation dynamics in signaling networks.</title>
        <authorList>
            <person name="Olsen J.V."/>
            <person name="Blagoev B."/>
            <person name="Gnad F."/>
            <person name="Macek B."/>
            <person name="Kumar C."/>
            <person name="Mortensen P."/>
            <person name="Mann M."/>
        </authorList>
    </citation>
    <scope>PHOSPHORYLATION [LARGE SCALE ANALYSIS] AT SER-1003</scope>
    <scope>IDENTIFICATION BY MASS SPECTROMETRY [LARGE SCALE ANALYSIS]</scope>
    <source>
        <tissue>Cervix carcinoma</tissue>
    </source>
</reference>
<reference key="5">
    <citation type="journal article" date="2008" name="Am. J. Hum. Genet.">
        <title>FAM83H mutations in families with autosomal-dominant hypocalcified amelogenesis imperfecta.</title>
        <authorList>
            <person name="Kim J.-W."/>
            <person name="Lee S.-K."/>
            <person name="Lee Z.H."/>
            <person name="Park J.-C."/>
            <person name="Lee K.-E."/>
            <person name="Lee M.-H."/>
            <person name="Park J.-T."/>
            <person name="Seo B.-M."/>
            <person name="Hu J.C.-C."/>
            <person name="Simmer J.P."/>
        </authorList>
    </citation>
    <scope>FUNCTION</scope>
    <scope>TISSUE SPECIFICITY</scope>
    <scope>INVOLVEMENT IN AI3A</scope>
</reference>
<reference key="6">
    <citation type="journal article" date="2008" name="Mol. Cell">
        <title>Kinase-selective enrichment enables quantitative phosphoproteomics of the kinome across the cell cycle.</title>
        <authorList>
            <person name="Daub H."/>
            <person name="Olsen J.V."/>
            <person name="Bairlein M."/>
            <person name="Gnad F."/>
            <person name="Oppermann F.S."/>
            <person name="Korner R."/>
            <person name="Greff Z."/>
            <person name="Keri G."/>
            <person name="Stemmann O."/>
            <person name="Mann M."/>
        </authorList>
    </citation>
    <scope>PHOSPHORYLATION [LARGE SCALE ANALYSIS] AT SER-523; SER-647; SER-785 AND SER-1003</scope>
    <scope>IDENTIFICATION BY MASS SPECTROMETRY [LARGE SCALE ANALYSIS]</scope>
    <source>
        <tissue>Cervix carcinoma</tissue>
    </source>
</reference>
<reference key="7">
    <citation type="journal article" date="2008" name="Proc. Natl. Acad. Sci. U.S.A.">
        <title>A quantitative atlas of mitotic phosphorylation.</title>
        <authorList>
            <person name="Dephoure N."/>
            <person name="Zhou C."/>
            <person name="Villen J."/>
            <person name="Beausoleil S.A."/>
            <person name="Bakalarski C.E."/>
            <person name="Elledge S.J."/>
            <person name="Gygi S.P."/>
        </authorList>
    </citation>
    <scope>PHOSPHORYLATION [LARGE SCALE ANALYSIS] AT SER-647; SER-881; THR-883; SER-892; SER-903; SER-936; SER-945; SER-1003; SER-1024 AND SER-1025</scope>
    <scope>IDENTIFICATION BY MASS SPECTROMETRY [LARGE SCALE ANALYSIS]</scope>
    <source>
        <tissue>Cervix carcinoma</tissue>
    </source>
</reference>
<reference key="8">
    <citation type="journal article" date="2009" name="Mol. Cell. Proteomics">
        <title>Large-scale proteomics analysis of the human kinome.</title>
        <authorList>
            <person name="Oppermann F.S."/>
            <person name="Gnad F."/>
            <person name="Olsen J.V."/>
            <person name="Hornberger R."/>
            <person name="Greff Z."/>
            <person name="Keri G."/>
            <person name="Mann M."/>
            <person name="Daub H."/>
        </authorList>
    </citation>
    <scope>PHOSPHORYLATION [LARGE SCALE ANALYSIS] AT SER-523; SER-914 AND SER-1003</scope>
    <scope>IDENTIFICATION BY MASS SPECTROMETRY [LARGE SCALE ANALYSIS]</scope>
</reference>
<reference key="9">
    <citation type="journal article" date="2010" name="Sci. Signal.">
        <title>Quantitative phosphoproteomics reveals widespread full phosphorylation site occupancy during mitosis.</title>
        <authorList>
            <person name="Olsen J.V."/>
            <person name="Vermeulen M."/>
            <person name="Santamaria A."/>
            <person name="Kumar C."/>
            <person name="Miller M.L."/>
            <person name="Jensen L.J."/>
            <person name="Gnad F."/>
            <person name="Cox J."/>
            <person name="Jensen T.S."/>
            <person name="Nigg E.A."/>
            <person name="Brunak S."/>
            <person name="Mann M."/>
        </authorList>
    </citation>
    <scope>PHOSPHORYLATION [LARGE SCALE ANALYSIS] AT THR-465; SER-523; SER-647; SER-759; SER-785; SER-870; SER-881; SER-892; SER-903; SER-914; SER-936; SER-945; SER-1003; THR-1040 AND SER-1048</scope>
    <scope>IDENTIFICATION BY MASS SPECTROMETRY [LARGE SCALE ANALYSIS]</scope>
    <source>
        <tissue>Cervix carcinoma</tissue>
    </source>
</reference>
<reference key="10">
    <citation type="journal article" date="2011" name="BMC Syst. Biol.">
        <title>Initial characterization of the human central proteome.</title>
        <authorList>
            <person name="Burkard T.R."/>
            <person name="Planyavsky M."/>
            <person name="Kaupe I."/>
            <person name="Breitwieser F.P."/>
            <person name="Buerckstuemmer T."/>
            <person name="Bennett K.L."/>
            <person name="Superti-Furga G."/>
            <person name="Colinge J."/>
        </authorList>
    </citation>
    <scope>IDENTIFICATION BY MASS SPECTROMETRY [LARGE SCALE ANALYSIS]</scope>
</reference>
<reference key="11">
    <citation type="journal article" date="2013" name="J. Cell Sci.">
        <title>A novel mechanism of keratin cytoskeleton organization through casein kinase Ialpha and FAM83H in colorectal cancer.</title>
        <authorList>
            <person name="Kuga T."/>
            <person name="Kume H."/>
            <person name="Kawasaki N."/>
            <person name="Sato M."/>
            <person name="Adachi J."/>
            <person name="Shiromizu T."/>
            <person name="Hoshino I."/>
            <person name="Nishimori T."/>
            <person name="Matsubara H."/>
            <person name="Tomonaga T."/>
        </authorList>
    </citation>
    <scope>FUNCTION</scope>
    <scope>INTERACTION WITH CSNK1A1 AND KRT18</scope>
    <scope>SUBCELLULAR LOCATION</scope>
    <scope>REGION</scope>
    <scope>MUTAGENESIS OF PHE-251 AND PHE-274</scope>
</reference>
<reference key="12">
    <citation type="journal article" date="2013" name="J. Proteome Res.">
        <title>Toward a comprehensive characterization of a human cancer cell phosphoproteome.</title>
        <authorList>
            <person name="Zhou H."/>
            <person name="Di Palma S."/>
            <person name="Preisinger C."/>
            <person name="Peng M."/>
            <person name="Polat A.N."/>
            <person name="Heck A.J."/>
            <person name="Mohammed S."/>
        </authorList>
    </citation>
    <scope>PHOSPHORYLATION [LARGE SCALE ANALYSIS] AT SER-513; SER-514; SER-516; SER-523; SER-647; SER-667; SER-785; SER-870; SER-881; SER-892; SER-903; SER-914; SER-925; SER-936; SER-1003; SER-1025 AND SER-1147</scope>
    <scope>IDENTIFICATION BY MASS SPECTROMETRY [LARGE SCALE ANALYSIS]</scope>
    <source>
        <tissue>Cervix carcinoma</tissue>
        <tissue>Erythroleukemia</tissue>
    </source>
</reference>
<reference key="13">
    <citation type="journal article" date="2014" name="J. Proteomics">
        <title>An enzyme assisted RP-RPLC approach for in-depth analysis of human liver phosphoproteome.</title>
        <authorList>
            <person name="Bian Y."/>
            <person name="Song C."/>
            <person name="Cheng K."/>
            <person name="Dong M."/>
            <person name="Wang F."/>
            <person name="Huang J."/>
            <person name="Sun D."/>
            <person name="Wang L."/>
            <person name="Ye M."/>
            <person name="Zou H."/>
        </authorList>
    </citation>
    <scope>PHOSPHORYLATION [LARGE SCALE ANALYSIS] AT SER-523; THR-756; SER-813; SER-914; SER-1003 AND SER-1068</scope>
    <scope>IDENTIFICATION BY MASS SPECTROMETRY [LARGE SCALE ANALYSIS]</scope>
    <source>
        <tissue>Liver</tissue>
    </source>
</reference>
<reference key="14">
    <citation type="journal article" date="2018" name="Sci. Signal.">
        <title>The DUF1669 domain of FAM83 family proteins anchor casein kinase 1 isoforms.</title>
        <authorList>
            <person name="Fulcher L.J."/>
            <person name="Bozatzi P."/>
            <person name="Tachie-Menson T."/>
            <person name="Wu K.Z.L."/>
            <person name="Cummins T.D."/>
            <person name="Bufton J.C."/>
            <person name="Pinkas D.M."/>
            <person name="Dunbar K."/>
            <person name="Shrestha S."/>
            <person name="Wood N.T."/>
            <person name="Weidlich S."/>
            <person name="Macartney T.J."/>
            <person name="Varghese J."/>
            <person name="Gourlay R."/>
            <person name="Campbell D.G."/>
            <person name="Dingwell K.S."/>
            <person name="Smith J.C."/>
            <person name="Bullock A.N."/>
            <person name="Sapkota G.P."/>
        </authorList>
    </citation>
    <scope>INTERACTION WITH CSNK1A1; CSNK1A1L; CSNK1D AND CSNK1E</scope>
    <scope>SUBCELLULAR LOCATION</scope>
    <scope>MUTAGENESIS OF ASP-236 AND PHE-270</scope>
</reference>
<reference key="15">
    <citation type="journal article" date="2015" name="Arch. Oral Biol.">
        <title>Novel missense mutation of the FAM83H gene causes retention of amelogenin and a mild clinical phenotype of hypocalcified enamel.</title>
        <authorList>
            <person name="Urzua B."/>
            <person name="Martinez C."/>
            <person name="Ortega-Pinto A."/>
            <person name="Adorno D."/>
            <person name="Morales-Bozo I."/>
            <person name="Riadi G."/>
            <person name="Jara L."/>
            <person name="Plaza A."/>
            <person name="Lefimil C."/>
            <person name="Lozano C."/>
            <person name="Reyes M."/>
        </authorList>
    </citation>
    <scope>VARIANT AI3A CYS-557</scope>
</reference>
<protein>
    <recommendedName>
        <fullName evidence="7">Protein FAM83H</fullName>
    </recommendedName>
</protein>
<name>FA83H_HUMAN</name>
<gene>
    <name evidence="9" type="primary">FAM83H</name>
</gene>
<accession>Q6ZRV2</accession>
<accession>A0JLS2</accession>
<accession>Q8N4W0</accession>
<dbReference type="EMBL" id="AC105219">
    <property type="status" value="NOT_ANNOTATED_CDS"/>
    <property type="molecule type" value="Genomic_DNA"/>
</dbReference>
<dbReference type="EMBL" id="AK127960">
    <property type="protein sequence ID" value="BAC87207.1"/>
    <property type="status" value="ALT_INIT"/>
    <property type="molecule type" value="mRNA"/>
</dbReference>
<dbReference type="EMBL" id="BC007264">
    <property type="protein sequence ID" value="AAH07264.1"/>
    <property type="molecule type" value="mRNA"/>
</dbReference>
<dbReference type="EMBL" id="BC033256">
    <property type="protein sequence ID" value="AAH33256.1"/>
    <property type="molecule type" value="mRNA"/>
</dbReference>
<dbReference type="CCDS" id="CCDS6410.2"/>
<dbReference type="RefSeq" id="NP_940890.4">
    <property type="nucleotide sequence ID" value="NM_198488.5"/>
</dbReference>
<dbReference type="RefSeq" id="XP_005250946.1">
    <property type="nucleotide sequence ID" value="XM_005250889.3"/>
</dbReference>
<dbReference type="SMR" id="Q6ZRV2"/>
<dbReference type="BioGRID" id="130292">
    <property type="interactions" value="174"/>
</dbReference>
<dbReference type="FunCoup" id="Q6ZRV2">
    <property type="interactions" value="1209"/>
</dbReference>
<dbReference type="IntAct" id="Q6ZRV2">
    <property type="interactions" value="123"/>
</dbReference>
<dbReference type="MINT" id="Q6ZRV2"/>
<dbReference type="STRING" id="9606.ENSP00000373565"/>
<dbReference type="GlyGen" id="Q6ZRV2">
    <property type="glycosylation" value="1 site"/>
</dbReference>
<dbReference type="iPTMnet" id="Q6ZRV2"/>
<dbReference type="PhosphoSitePlus" id="Q6ZRV2"/>
<dbReference type="SwissPalm" id="Q6ZRV2"/>
<dbReference type="BioMuta" id="FAM83H"/>
<dbReference type="DMDM" id="296439349"/>
<dbReference type="CPTAC" id="CPTAC-367"/>
<dbReference type="CPTAC" id="CPTAC-368"/>
<dbReference type="jPOST" id="Q6ZRV2"/>
<dbReference type="MassIVE" id="Q6ZRV2"/>
<dbReference type="PaxDb" id="9606-ENSP00000373565"/>
<dbReference type="PeptideAtlas" id="Q6ZRV2"/>
<dbReference type="ProteomicsDB" id="68170"/>
<dbReference type="Pumba" id="Q6ZRV2"/>
<dbReference type="Antibodypedia" id="14675">
    <property type="antibodies" value="40 antibodies from 12 providers"/>
</dbReference>
<dbReference type="DNASU" id="286077"/>
<dbReference type="Ensembl" id="ENST00000388913.4">
    <property type="protein sequence ID" value="ENSP00000373565.3"/>
    <property type="gene ID" value="ENSG00000180921.7"/>
</dbReference>
<dbReference type="Ensembl" id="ENST00000612192.2">
    <property type="protein sequence ID" value="ENSP00000478790.1"/>
    <property type="gene ID" value="ENSG00000273889.2"/>
</dbReference>
<dbReference type="GeneID" id="286077"/>
<dbReference type="KEGG" id="hsa:286077"/>
<dbReference type="MANE-Select" id="ENST00000388913.4">
    <property type="protein sequence ID" value="ENSP00000373565.3"/>
    <property type="RefSeq nucleotide sequence ID" value="NM_198488.5"/>
    <property type="RefSeq protein sequence ID" value="NP_940890.4"/>
</dbReference>
<dbReference type="UCSC" id="uc064rej.1">
    <property type="organism name" value="human"/>
</dbReference>
<dbReference type="AGR" id="HGNC:24797"/>
<dbReference type="CTD" id="286077"/>
<dbReference type="DisGeNET" id="286077"/>
<dbReference type="GeneCards" id="FAM83H"/>
<dbReference type="HGNC" id="HGNC:24797">
    <property type="gene designation" value="FAM83H"/>
</dbReference>
<dbReference type="HPA" id="ENSG00000180921">
    <property type="expression patterns" value="Tissue enhanced (esophagus)"/>
</dbReference>
<dbReference type="MalaCards" id="FAM83H"/>
<dbReference type="MIM" id="130900">
    <property type="type" value="phenotype"/>
</dbReference>
<dbReference type="MIM" id="611927">
    <property type="type" value="gene"/>
</dbReference>
<dbReference type="neXtProt" id="NX_Q6ZRV2"/>
<dbReference type="OpenTargets" id="ENSG00000180921"/>
<dbReference type="Orphanet" id="100032">
    <property type="disease" value="Hypocalcified amelogenesis imperfecta"/>
</dbReference>
<dbReference type="PharmGKB" id="PA144596434"/>
<dbReference type="VEuPathDB" id="HostDB:ENSG00000180921"/>
<dbReference type="eggNOG" id="ENOG502QW7K">
    <property type="taxonomic scope" value="Eukaryota"/>
</dbReference>
<dbReference type="GeneTree" id="ENSGT00940000159342"/>
<dbReference type="HOGENOM" id="CLU_009734_0_0_1"/>
<dbReference type="InParanoid" id="Q6ZRV2"/>
<dbReference type="OMA" id="GCHGEDT"/>
<dbReference type="OrthoDB" id="9832446at2759"/>
<dbReference type="PAN-GO" id="Q6ZRV2">
    <property type="GO annotations" value="7 GO annotations based on evolutionary models"/>
</dbReference>
<dbReference type="PhylomeDB" id="Q6ZRV2"/>
<dbReference type="TreeFam" id="TF330777"/>
<dbReference type="PathwayCommons" id="Q6ZRV2"/>
<dbReference type="SignaLink" id="Q6ZRV2"/>
<dbReference type="SIGNOR" id="Q6ZRV2"/>
<dbReference type="BioGRID-ORCS" id="286077">
    <property type="hits" value="46 hits in 1155 CRISPR screens"/>
</dbReference>
<dbReference type="CD-CODE" id="804901D1">
    <property type="entry name" value="Nuclear speckle"/>
</dbReference>
<dbReference type="CD-CODE" id="86762C76">
    <property type="entry name" value="ZNFX1 condensate"/>
</dbReference>
<dbReference type="GeneWiki" id="FAM83H"/>
<dbReference type="GenomeRNAi" id="286077"/>
<dbReference type="Pharos" id="Q6ZRV2">
    <property type="development level" value="Tbio"/>
</dbReference>
<dbReference type="PRO" id="PR:Q6ZRV2"/>
<dbReference type="Proteomes" id="UP000005640">
    <property type="component" value="Chromosome 8"/>
</dbReference>
<dbReference type="RNAct" id="Q6ZRV2">
    <property type="molecule type" value="protein"/>
</dbReference>
<dbReference type="Bgee" id="ENSG00000180921">
    <property type="expression patterns" value="Expressed in lower esophagus mucosa and 94 other cell types or tissues"/>
</dbReference>
<dbReference type="ExpressionAtlas" id="Q6ZRV2">
    <property type="expression patterns" value="baseline and differential"/>
</dbReference>
<dbReference type="GO" id="GO:0005737">
    <property type="term" value="C:cytoplasm"/>
    <property type="evidence" value="ECO:0007669"/>
    <property type="project" value="UniProtKB-KW"/>
</dbReference>
<dbReference type="GO" id="GO:0005856">
    <property type="term" value="C:cytoskeleton"/>
    <property type="evidence" value="ECO:0007669"/>
    <property type="project" value="UniProtKB-SubCell"/>
</dbReference>
<dbReference type="GO" id="GO:1990254">
    <property type="term" value="F:keratin filament binding"/>
    <property type="evidence" value="ECO:0000314"/>
    <property type="project" value="UniProtKB"/>
</dbReference>
<dbReference type="GO" id="GO:0019901">
    <property type="term" value="F:protein kinase binding"/>
    <property type="evidence" value="ECO:0000353"/>
    <property type="project" value="UniProtKB"/>
</dbReference>
<dbReference type="GO" id="GO:0031214">
    <property type="term" value="P:biomineral tissue development"/>
    <property type="evidence" value="ECO:0007669"/>
    <property type="project" value="UniProtKB-KW"/>
</dbReference>
<dbReference type="GO" id="GO:0045104">
    <property type="term" value="P:intermediate filament cytoskeleton organization"/>
    <property type="evidence" value="ECO:0000315"/>
    <property type="project" value="UniProtKB"/>
</dbReference>
<dbReference type="GO" id="GO:0030335">
    <property type="term" value="P:positive regulation of cell migration"/>
    <property type="evidence" value="ECO:0000315"/>
    <property type="project" value="UniProtKB"/>
</dbReference>
<dbReference type="GO" id="GO:0044380">
    <property type="term" value="P:protein localization to cytoskeleton"/>
    <property type="evidence" value="ECO:0000315"/>
    <property type="project" value="UniProtKB"/>
</dbReference>
<dbReference type="GO" id="GO:0007165">
    <property type="term" value="P:signal transduction"/>
    <property type="evidence" value="ECO:0000318"/>
    <property type="project" value="GO_Central"/>
</dbReference>
<dbReference type="CDD" id="cd09188">
    <property type="entry name" value="PLDc_FAM83H_N"/>
    <property type="match status" value="1"/>
</dbReference>
<dbReference type="FunFam" id="3.30.870.10:FF:000004">
    <property type="entry name" value="protein FAM83H isoform X2"/>
    <property type="match status" value="1"/>
</dbReference>
<dbReference type="Gene3D" id="3.30.870.10">
    <property type="entry name" value="Endonuclease Chain A"/>
    <property type="match status" value="1"/>
</dbReference>
<dbReference type="InterPro" id="IPR050944">
    <property type="entry name" value="FAM83"/>
</dbReference>
<dbReference type="InterPro" id="IPR041996">
    <property type="entry name" value="PLDc_FAM83H_N"/>
</dbReference>
<dbReference type="InterPro" id="IPR012461">
    <property type="entry name" value="SACK1"/>
</dbReference>
<dbReference type="PANTHER" id="PTHR16181">
    <property type="entry name" value="PROTEIN FAM83A-RELATED"/>
    <property type="match status" value="1"/>
</dbReference>
<dbReference type="PANTHER" id="PTHR16181:SF29">
    <property type="entry name" value="PROTEIN FAM83A-RELATED"/>
    <property type="match status" value="1"/>
</dbReference>
<dbReference type="Pfam" id="PF07894">
    <property type="entry name" value="SACK1"/>
    <property type="match status" value="1"/>
</dbReference>
<dbReference type="SUPFAM" id="SSF56024">
    <property type="entry name" value="Phospholipase D/nuclease"/>
    <property type="match status" value="1"/>
</dbReference>
<evidence type="ECO:0000250" key="1">
    <source>
        <dbReference type="UniProtKB" id="Q148V8"/>
    </source>
</evidence>
<evidence type="ECO:0000256" key="2">
    <source>
        <dbReference type="SAM" id="MobiDB-lite"/>
    </source>
</evidence>
<evidence type="ECO:0000269" key="3">
    <source>
    </source>
</evidence>
<evidence type="ECO:0000269" key="4">
    <source>
    </source>
</evidence>
<evidence type="ECO:0000269" key="5">
    <source>
    </source>
</evidence>
<evidence type="ECO:0000269" key="6">
    <source>
    </source>
</evidence>
<evidence type="ECO:0000305" key="7"/>
<evidence type="ECO:0000305" key="8">
    <source>
    </source>
</evidence>
<evidence type="ECO:0000312" key="9">
    <source>
        <dbReference type="HGNC" id="HGNC:24797"/>
    </source>
</evidence>
<evidence type="ECO:0007744" key="10">
    <source>
    </source>
</evidence>
<evidence type="ECO:0007744" key="11">
    <source>
    </source>
</evidence>
<evidence type="ECO:0007744" key="12">
    <source>
    </source>
</evidence>
<evidence type="ECO:0007744" key="13">
    <source>
    </source>
</evidence>
<evidence type="ECO:0007744" key="14">
    <source>
    </source>
</evidence>
<evidence type="ECO:0007744" key="15">
    <source>
    </source>
</evidence>
<evidence type="ECO:0007744" key="16">
    <source>
    </source>
</evidence>